<feature type="chain" id="PRO_0000063033" description="Protein CbxX, plasmid">
    <location>
        <begin position="1"/>
        <end position="317"/>
    </location>
</feature>
<feature type="binding site" evidence="1">
    <location>
        <begin position="85"/>
        <end position="92"/>
    </location>
    <ligand>
        <name>ATP</name>
        <dbReference type="ChEBI" id="CHEBI:30616"/>
    </ligand>
</feature>
<geneLocation type="plasmid">
    <name>megaplasmid pHG1</name>
</geneLocation>
<organism>
    <name type="scientific">Cupriavidus necator (strain ATCC 17699 / DSM 428 / KCTC 22496 / NCIMB 10442 / H16 / Stanier 337)</name>
    <name type="common">Ralstonia eutropha</name>
    <dbReference type="NCBI Taxonomy" id="381666"/>
    <lineage>
        <taxon>Bacteria</taxon>
        <taxon>Pseudomonadati</taxon>
        <taxon>Pseudomonadota</taxon>
        <taxon>Betaproteobacteria</taxon>
        <taxon>Burkholderiales</taxon>
        <taxon>Burkholderiaceae</taxon>
        <taxon>Cupriavidus</taxon>
    </lineage>
</organism>
<name>CBXXP_CUPNH</name>
<accession>Q04540</accession>
<protein>
    <recommendedName>
        <fullName>Protein CbxX, plasmid</fullName>
    </recommendedName>
</protein>
<reference key="1">
    <citation type="journal article" date="1992" name="J. Bacteriol.">
        <title>The Calvin cycle enzyme pentose-5-phosphate 3-epimerase is encoded within the cfx operons of the chemoautotroph Alcaligenes eutrophus.</title>
        <authorList>
            <person name="Kusian B."/>
            <person name="Yoo J.-G."/>
            <person name="Bednarski R."/>
            <person name="Bowien B."/>
        </authorList>
    </citation>
    <scope>NUCLEOTIDE SEQUENCE [GENOMIC DNA]</scope>
</reference>
<reference key="2">
    <citation type="journal article" date="2003" name="J. Mol. Biol.">
        <title>Complete nucleotide sequence of pHG1: a Ralstonia eutropha H16 megaplasmid encoding key enzymes of H(2)-based lithoautotrophy and anaerobiosis.</title>
        <authorList>
            <person name="Schwartz E."/>
            <person name="Henne A."/>
            <person name="Cramm R."/>
            <person name="Eitinger T."/>
            <person name="Friedrich B."/>
            <person name="Gottschalk G."/>
        </authorList>
    </citation>
    <scope>NUCLEOTIDE SEQUENCE [LARGE SCALE GENOMIC DNA]</scope>
    <source>
        <strain>ATCC 17699 / DSM 428 / KCTC 22496 / NCIMB 10442 / H16 / Stanier 337</strain>
    </source>
</reference>
<sequence>MSAPETTAPLQPPAAQAASLPGSLAESLASSGITELLAQLDRELIGLKPVKARIRDIAALLLVDKLRAARGFSAGAPSLHMCFTGNPGTGKTTVAMRMAQILHQLGYVRRGHLVAVTRDDLVGQYIGHTAPKTKEILKKALGGVLFIDEAYYLYRPENERDYGQEAIEILLQVMENNRDDLVVILAGYKDRMDRFFESNPGMSSRVAHHVDFPDYQLDELRQIADLMLAEMQYRFDDESRAVFADYLARRMAQPHFANARSVRNALDRARLRHASRLLDDAGTVADDRTLTTITASDLLASRVFSKAAPAAQTPAKE</sequence>
<proteinExistence type="inferred from homology"/>
<gene>
    <name type="primary">cbxXP</name>
    <name type="synonym">cfxXP</name>
    <name type="ordered locus">PHG425</name>
</gene>
<comment type="function">
    <text>Seems to be necessary for the expression of RuBisCO.</text>
</comment>
<comment type="similarity">
    <text evidence="2">Belongs to the CbxX/CfxQ family.</text>
</comment>
<keyword id="KW-0067">ATP-binding</keyword>
<keyword id="KW-0547">Nucleotide-binding</keyword>
<keyword id="KW-0614">Plasmid</keyword>
<keyword id="KW-1185">Reference proteome</keyword>
<dbReference type="EMBL" id="M64172">
    <property type="protein sequence ID" value="AAA98229.1"/>
    <property type="molecule type" value="Genomic_DNA"/>
</dbReference>
<dbReference type="EMBL" id="AY305378">
    <property type="protein sequence ID" value="AAP86174.1"/>
    <property type="molecule type" value="Genomic_DNA"/>
</dbReference>
<dbReference type="RefSeq" id="WP_011154337.1">
    <property type="nucleotide sequence ID" value="NC_005241.1"/>
</dbReference>
<dbReference type="SMR" id="Q04540"/>
<dbReference type="KEGG" id="reh:PHG425"/>
<dbReference type="PATRIC" id="fig|381666.6.peg.353"/>
<dbReference type="eggNOG" id="COG0464">
    <property type="taxonomic scope" value="Bacteria"/>
</dbReference>
<dbReference type="HOGENOM" id="CLU_008749_1_0_4"/>
<dbReference type="OrthoDB" id="9806903at2"/>
<dbReference type="Proteomes" id="UP000008210">
    <property type="component" value="Plasmid megaplasmid pHG1"/>
</dbReference>
<dbReference type="GO" id="GO:0005524">
    <property type="term" value="F:ATP binding"/>
    <property type="evidence" value="ECO:0007669"/>
    <property type="project" value="UniProtKB-KW"/>
</dbReference>
<dbReference type="GO" id="GO:0016887">
    <property type="term" value="F:ATP hydrolysis activity"/>
    <property type="evidence" value="ECO:0007669"/>
    <property type="project" value="InterPro"/>
</dbReference>
<dbReference type="CDD" id="cd00009">
    <property type="entry name" value="AAA"/>
    <property type="match status" value="1"/>
</dbReference>
<dbReference type="FunFam" id="3.40.50.300:FF:000216">
    <property type="entry name" value="Type VII secretion ATPase EccA"/>
    <property type="match status" value="1"/>
</dbReference>
<dbReference type="Gene3D" id="1.10.8.60">
    <property type="match status" value="1"/>
</dbReference>
<dbReference type="Gene3D" id="3.40.50.300">
    <property type="entry name" value="P-loop containing nucleotide triphosphate hydrolases"/>
    <property type="match status" value="1"/>
</dbReference>
<dbReference type="InterPro" id="IPR003593">
    <property type="entry name" value="AAA+_ATPase"/>
</dbReference>
<dbReference type="InterPro" id="IPR041627">
    <property type="entry name" value="AAA_lid_6"/>
</dbReference>
<dbReference type="InterPro" id="IPR003959">
    <property type="entry name" value="ATPase_AAA_core"/>
</dbReference>
<dbReference type="InterPro" id="IPR000470">
    <property type="entry name" value="CbxX/CfqX_mono"/>
</dbReference>
<dbReference type="InterPro" id="IPR000641">
    <property type="entry name" value="CbxX/CfxQ"/>
</dbReference>
<dbReference type="InterPro" id="IPR050773">
    <property type="entry name" value="CbxX/CfxQ_RuBisCO_ESX"/>
</dbReference>
<dbReference type="InterPro" id="IPR027417">
    <property type="entry name" value="P-loop_NTPase"/>
</dbReference>
<dbReference type="NCBIfam" id="TIGR02880">
    <property type="entry name" value="cbbX_cfxQ"/>
    <property type="match status" value="1"/>
</dbReference>
<dbReference type="PANTHER" id="PTHR43392">
    <property type="entry name" value="AAA-TYPE ATPASE FAMILY PROTEIN / ANKYRIN REPEAT FAMILY PROTEIN"/>
    <property type="match status" value="1"/>
</dbReference>
<dbReference type="PANTHER" id="PTHR43392:SF2">
    <property type="entry name" value="AAA-TYPE ATPASE FAMILY PROTEIN _ ANKYRIN REPEAT FAMILY PROTEIN"/>
    <property type="match status" value="1"/>
</dbReference>
<dbReference type="Pfam" id="PF00004">
    <property type="entry name" value="AAA"/>
    <property type="match status" value="1"/>
</dbReference>
<dbReference type="Pfam" id="PF17866">
    <property type="entry name" value="AAA_lid_6"/>
    <property type="match status" value="1"/>
</dbReference>
<dbReference type="PRINTS" id="PR00819">
    <property type="entry name" value="CBXCFQXSUPER"/>
</dbReference>
<dbReference type="PRINTS" id="PR00820">
    <property type="entry name" value="CBXXCFQX"/>
</dbReference>
<dbReference type="SMART" id="SM00382">
    <property type="entry name" value="AAA"/>
    <property type="match status" value="1"/>
</dbReference>
<dbReference type="SUPFAM" id="SSF52540">
    <property type="entry name" value="P-loop containing nucleoside triphosphate hydrolases"/>
    <property type="match status" value="1"/>
</dbReference>
<evidence type="ECO:0000255" key="1"/>
<evidence type="ECO:0000305" key="2"/>